<reference evidence="10" key="1">
    <citation type="journal article" date="2007" name="Exp. Cell Res.">
        <title>Nuclear envelope precursor vesicle targeting to chromatin is stimulated by protein phosphatase 1 in Xenopus egg extracts.</title>
        <authorList>
            <person name="Ito H."/>
            <person name="Koyama Y."/>
            <person name="Takano M."/>
            <person name="Ishii K."/>
            <person name="Maeno M."/>
            <person name="Furukawa K."/>
            <person name="Horigome T."/>
        </authorList>
    </citation>
    <scope>NUCLEOTIDE SEQUENCE [MRNA]</scope>
    <source>
        <tissue evidence="10">Oocyte</tissue>
    </source>
</reference>
<reference evidence="9" key="2">
    <citation type="submission" date="2003-06" db="EMBL/GenBank/DDBJ databases">
        <authorList>
            <consortium name="NIH - Xenopus Gene Collection (XGC) project"/>
        </authorList>
    </citation>
    <scope>NUCLEOTIDE SEQUENCE [LARGE SCALE MRNA]</scope>
    <source>
        <tissue evidence="9">Tadpole</tissue>
    </source>
</reference>
<gene>
    <name type="primary">ppp1cc-b</name>
</gene>
<keyword id="KW-0119">Carbohydrate metabolism</keyword>
<keyword id="KW-0131">Cell cycle</keyword>
<keyword id="KW-0132">Cell division</keyword>
<keyword id="KW-0137">Centromere</keyword>
<keyword id="KW-0158">Chromosome</keyword>
<keyword id="KW-0963">Cytoplasm</keyword>
<keyword id="KW-0321">Glycogen metabolism</keyword>
<keyword id="KW-0378">Hydrolase</keyword>
<keyword id="KW-0995">Kinetochore</keyword>
<keyword id="KW-0464">Manganese</keyword>
<keyword id="KW-0479">Metal-binding</keyword>
<keyword id="KW-0496">Mitochondrion</keyword>
<keyword id="KW-0498">Mitosis</keyword>
<keyword id="KW-0539">Nucleus</keyword>
<keyword id="KW-0904">Protein phosphatase</keyword>
<keyword id="KW-1185">Reference proteome</keyword>
<comment type="function">
    <text evidence="1">Protein phosphatase that associates with over 200 regulatory proteins to form highly specific holoenzymes which dephosphorylate hundreds of biological targets. Protein phosphatase 1 (PP1) is essential for cell division, and participates in the regulation of glycogen metabolism, muscle contractility and protein synthesis (By similarity). Promotes nuclear envelope reassembly by targeting nuclear membrane vesicles to chromatin at the end of mitosis. Acts by dephosphorylating membrane proteins such as lamin B receptor (lbr) to regulate the binding of membrane proteins to chromatin (By similarity).</text>
</comment>
<comment type="catalytic activity">
    <reaction>
        <text>O-phospho-L-seryl-[protein] + H2O = L-seryl-[protein] + phosphate</text>
        <dbReference type="Rhea" id="RHEA:20629"/>
        <dbReference type="Rhea" id="RHEA-COMP:9863"/>
        <dbReference type="Rhea" id="RHEA-COMP:11604"/>
        <dbReference type="ChEBI" id="CHEBI:15377"/>
        <dbReference type="ChEBI" id="CHEBI:29999"/>
        <dbReference type="ChEBI" id="CHEBI:43474"/>
        <dbReference type="ChEBI" id="CHEBI:83421"/>
        <dbReference type="EC" id="3.1.3.16"/>
    </reaction>
</comment>
<comment type="catalytic activity">
    <reaction>
        <text>O-phospho-L-threonyl-[protein] + H2O = L-threonyl-[protein] + phosphate</text>
        <dbReference type="Rhea" id="RHEA:47004"/>
        <dbReference type="Rhea" id="RHEA-COMP:11060"/>
        <dbReference type="Rhea" id="RHEA-COMP:11605"/>
        <dbReference type="ChEBI" id="CHEBI:15377"/>
        <dbReference type="ChEBI" id="CHEBI:30013"/>
        <dbReference type="ChEBI" id="CHEBI:43474"/>
        <dbReference type="ChEBI" id="CHEBI:61977"/>
        <dbReference type="EC" id="3.1.3.16"/>
    </reaction>
</comment>
<comment type="cofactor">
    <cofactor evidence="1">
        <name>Mn(2+)</name>
        <dbReference type="ChEBI" id="CHEBI:29035"/>
    </cofactor>
    <text evidence="1">Binds 2 manganese ions per subunit.</text>
</comment>
<comment type="subunit">
    <text evidence="4">PP1 comprises a catalytic subunit, ppp1c1, ppp1cb or ppp1cc, which is folded into its native form by inhibitor 2 and glycogen synthetase kinase 3, and then is complexed to one or several targeting or regulatory subunits.</text>
</comment>
<comment type="subcellular location">
    <subcellularLocation>
        <location evidence="3">Cytoplasm</location>
    </subcellularLocation>
    <subcellularLocation>
        <location evidence="1">Nucleus</location>
    </subcellularLocation>
    <subcellularLocation>
        <location evidence="1">Cleavage furrow</location>
    </subcellularLocation>
    <subcellularLocation>
        <location evidence="1">Nucleus</location>
        <location evidence="1">Nucleolus</location>
    </subcellularLocation>
    <subcellularLocation>
        <location evidence="1">Nucleus</location>
        <location evidence="1">Nucleoplasm</location>
    </subcellularLocation>
    <subcellularLocation>
        <location evidence="1">Chromosome</location>
        <location evidence="1">Centromere</location>
        <location evidence="1">Kinetochore</location>
    </subcellularLocation>
    <subcellularLocation>
        <location evidence="1">Nucleus speckle</location>
    </subcellularLocation>
    <subcellularLocation>
        <location evidence="1">Midbody</location>
    </subcellularLocation>
    <subcellularLocation>
        <location evidence="1">Mitochondrion</location>
    </subcellularLocation>
</comment>
<comment type="similarity">
    <text evidence="5">Belongs to the PPP phosphatase family. PP-1 subfamily.</text>
</comment>
<comment type="sequence caution" evidence="8">
    <conflict type="erroneous termination">
        <sequence resource="EMBL-CDS" id="BAF51555"/>
    </conflict>
    <text>Truncated C-terminus.</text>
</comment>
<comment type="sequence caution" evidence="8">
    <conflict type="frameshift">
        <sequence resource="EMBL-CDS" id="BAF51555"/>
    </conflict>
</comment>
<dbReference type="EC" id="3.1.3.16"/>
<dbReference type="EMBL" id="AB106882">
    <property type="protein sequence ID" value="BAF51555.1"/>
    <property type="status" value="ALT_SEQ"/>
    <property type="molecule type" value="mRNA"/>
</dbReference>
<dbReference type="EMBL" id="BC054188">
    <property type="protein sequence ID" value="AAH54188.1"/>
    <property type="molecule type" value="mRNA"/>
</dbReference>
<dbReference type="RefSeq" id="NP_001080904.1">
    <property type="nucleotide sequence ID" value="NM_001087435.1"/>
</dbReference>
<dbReference type="SMR" id="Q7SZ10"/>
<dbReference type="DNASU" id="380598"/>
<dbReference type="GeneID" id="380598"/>
<dbReference type="KEGG" id="xla:380598"/>
<dbReference type="AGR" id="Xenbase:XB-GENE-17332984"/>
<dbReference type="CTD" id="380598"/>
<dbReference type="Xenbase" id="XB-GENE-17332984">
    <property type="gene designation" value="ppp1cc.S"/>
</dbReference>
<dbReference type="OMA" id="RNIARPM"/>
<dbReference type="OrthoDB" id="1930084at2759"/>
<dbReference type="Proteomes" id="UP000186698">
    <property type="component" value="Chromosome 1S"/>
</dbReference>
<dbReference type="Bgee" id="380598">
    <property type="expression patterns" value="Expressed in egg cell and 19 other cell types or tissues"/>
</dbReference>
<dbReference type="GO" id="GO:0032154">
    <property type="term" value="C:cleavage furrow"/>
    <property type="evidence" value="ECO:0007669"/>
    <property type="project" value="UniProtKB-SubCell"/>
</dbReference>
<dbReference type="GO" id="GO:0005737">
    <property type="term" value="C:cytoplasm"/>
    <property type="evidence" value="ECO:0000318"/>
    <property type="project" value="GO_Central"/>
</dbReference>
<dbReference type="GO" id="GO:0000776">
    <property type="term" value="C:kinetochore"/>
    <property type="evidence" value="ECO:0007669"/>
    <property type="project" value="UniProtKB-KW"/>
</dbReference>
<dbReference type="GO" id="GO:0030496">
    <property type="term" value="C:midbody"/>
    <property type="evidence" value="ECO:0007669"/>
    <property type="project" value="UniProtKB-SubCell"/>
</dbReference>
<dbReference type="GO" id="GO:0005739">
    <property type="term" value="C:mitochondrion"/>
    <property type="evidence" value="ECO:0000250"/>
    <property type="project" value="UniProtKB"/>
</dbReference>
<dbReference type="GO" id="GO:0016607">
    <property type="term" value="C:nuclear speck"/>
    <property type="evidence" value="ECO:0007669"/>
    <property type="project" value="UniProtKB-SubCell"/>
</dbReference>
<dbReference type="GO" id="GO:0005730">
    <property type="term" value="C:nucleolus"/>
    <property type="evidence" value="ECO:0007669"/>
    <property type="project" value="UniProtKB-SubCell"/>
</dbReference>
<dbReference type="GO" id="GO:0005634">
    <property type="term" value="C:nucleus"/>
    <property type="evidence" value="ECO:0000318"/>
    <property type="project" value="GO_Central"/>
</dbReference>
<dbReference type="GO" id="GO:0046872">
    <property type="term" value="F:metal ion binding"/>
    <property type="evidence" value="ECO:0007669"/>
    <property type="project" value="UniProtKB-KW"/>
</dbReference>
<dbReference type="GO" id="GO:0004722">
    <property type="term" value="F:protein serine/threonine phosphatase activity"/>
    <property type="evidence" value="ECO:0000250"/>
    <property type="project" value="UniProtKB"/>
</dbReference>
<dbReference type="GO" id="GO:0051301">
    <property type="term" value="P:cell division"/>
    <property type="evidence" value="ECO:0007669"/>
    <property type="project" value="UniProtKB-KW"/>
</dbReference>
<dbReference type="GO" id="GO:0005977">
    <property type="term" value="P:glycogen metabolic process"/>
    <property type="evidence" value="ECO:0007669"/>
    <property type="project" value="UniProtKB-KW"/>
</dbReference>
<dbReference type="GO" id="GO:0007084">
    <property type="term" value="P:mitotic nuclear membrane reassembly"/>
    <property type="evidence" value="ECO:0000250"/>
    <property type="project" value="UniProtKB"/>
</dbReference>
<dbReference type="GO" id="GO:0006470">
    <property type="term" value="P:protein dephosphorylation"/>
    <property type="evidence" value="ECO:0000250"/>
    <property type="project" value="UniProtKB"/>
</dbReference>
<dbReference type="CDD" id="cd07414">
    <property type="entry name" value="MPP_PP1_PPKL"/>
    <property type="match status" value="1"/>
</dbReference>
<dbReference type="FunFam" id="3.60.21.10:FF:000004">
    <property type="entry name" value="Serine/threonine-protein phosphatase"/>
    <property type="match status" value="1"/>
</dbReference>
<dbReference type="Gene3D" id="3.60.21.10">
    <property type="match status" value="1"/>
</dbReference>
<dbReference type="InterPro" id="IPR004843">
    <property type="entry name" value="Calcineurin-like_PHP_ApaH"/>
</dbReference>
<dbReference type="InterPro" id="IPR029052">
    <property type="entry name" value="Metallo-depent_PP-like"/>
</dbReference>
<dbReference type="InterPro" id="IPR050341">
    <property type="entry name" value="PP1_catalytic_subunit"/>
</dbReference>
<dbReference type="InterPro" id="IPR006186">
    <property type="entry name" value="Ser/Thr-sp_prot-phosphatase"/>
</dbReference>
<dbReference type="InterPro" id="IPR031675">
    <property type="entry name" value="STPPase_N"/>
</dbReference>
<dbReference type="PANTHER" id="PTHR11668">
    <property type="entry name" value="SERINE/THREONINE PROTEIN PHOSPHATASE"/>
    <property type="match status" value="1"/>
</dbReference>
<dbReference type="PANTHER" id="PTHR11668:SF300">
    <property type="entry name" value="SERINE_THREONINE-PROTEIN PHOSPHATASE"/>
    <property type="match status" value="1"/>
</dbReference>
<dbReference type="Pfam" id="PF00149">
    <property type="entry name" value="Metallophos"/>
    <property type="match status" value="1"/>
</dbReference>
<dbReference type="Pfam" id="PF16891">
    <property type="entry name" value="STPPase_N"/>
    <property type="match status" value="1"/>
</dbReference>
<dbReference type="PRINTS" id="PR00114">
    <property type="entry name" value="STPHPHTASE"/>
</dbReference>
<dbReference type="SMART" id="SM00156">
    <property type="entry name" value="PP2Ac"/>
    <property type="match status" value="1"/>
</dbReference>
<dbReference type="SUPFAM" id="SSF56300">
    <property type="entry name" value="Metallo-dependent phosphatases"/>
    <property type="match status" value="1"/>
</dbReference>
<dbReference type="PROSITE" id="PS00125">
    <property type="entry name" value="SER_THR_PHOSPHATASE"/>
    <property type="match status" value="1"/>
</dbReference>
<proteinExistence type="evidence at transcript level"/>
<organism>
    <name type="scientific">Xenopus laevis</name>
    <name type="common">African clawed frog</name>
    <dbReference type="NCBI Taxonomy" id="8355"/>
    <lineage>
        <taxon>Eukaryota</taxon>
        <taxon>Metazoa</taxon>
        <taxon>Chordata</taxon>
        <taxon>Craniata</taxon>
        <taxon>Vertebrata</taxon>
        <taxon>Euteleostomi</taxon>
        <taxon>Amphibia</taxon>
        <taxon>Batrachia</taxon>
        <taxon>Anura</taxon>
        <taxon>Pipoidea</taxon>
        <taxon>Pipidae</taxon>
        <taxon>Xenopodinae</taxon>
        <taxon>Xenopus</taxon>
        <taxon>Xenopus</taxon>
    </lineage>
</organism>
<evidence type="ECO:0000250" key="1"/>
<evidence type="ECO:0000250" key="2">
    <source>
        <dbReference type="UniProtKB" id="P36873"/>
    </source>
</evidence>
<evidence type="ECO:0000250" key="3">
    <source>
        <dbReference type="UniProtKB" id="P36874"/>
    </source>
</evidence>
<evidence type="ECO:0000250" key="4">
    <source>
        <dbReference type="UniProtKB" id="P63088"/>
    </source>
</evidence>
<evidence type="ECO:0000255" key="5"/>
<evidence type="ECO:0000256" key="6">
    <source>
        <dbReference type="SAM" id="MobiDB-lite"/>
    </source>
</evidence>
<evidence type="ECO:0000303" key="7">
    <source>
    </source>
</evidence>
<evidence type="ECO:0000305" key="8"/>
<evidence type="ECO:0000312" key="9">
    <source>
        <dbReference type="EMBL" id="AAH54188.1"/>
    </source>
</evidence>
<evidence type="ECO:0000312" key="10">
    <source>
        <dbReference type="EMBL" id="BAF51555.1"/>
    </source>
</evidence>
<feature type="chain" id="PRO_0000365635" description="Serine/threonine-protein phosphatase PP1-gamma catalytic subunit B">
    <location>
        <begin position="1"/>
        <end position="323"/>
    </location>
</feature>
<feature type="region of interest" description="Disordered" evidence="6">
    <location>
        <begin position="301"/>
        <end position="323"/>
    </location>
</feature>
<feature type="active site" description="Proton donor" evidence="2">
    <location>
        <position position="125"/>
    </location>
</feature>
<feature type="binding site" evidence="1">
    <location>
        <position position="64"/>
    </location>
    <ligand>
        <name>Mn(2+)</name>
        <dbReference type="ChEBI" id="CHEBI:29035"/>
        <label>1</label>
    </ligand>
</feature>
<feature type="binding site" evidence="1">
    <location>
        <position position="66"/>
    </location>
    <ligand>
        <name>Mn(2+)</name>
        <dbReference type="ChEBI" id="CHEBI:29035"/>
        <label>1</label>
    </ligand>
</feature>
<feature type="binding site" evidence="1">
    <location>
        <position position="92"/>
    </location>
    <ligand>
        <name>Mn(2+)</name>
        <dbReference type="ChEBI" id="CHEBI:29035"/>
        <label>1</label>
    </ligand>
</feature>
<feature type="binding site" evidence="1">
    <location>
        <position position="92"/>
    </location>
    <ligand>
        <name>Mn(2+)</name>
        <dbReference type="ChEBI" id="CHEBI:29035"/>
        <label>2</label>
    </ligand>
</feature>
<feature type="binding site" evidence="1">
    <location>
        <position position="124"/>
    </location>
    <ligand>
        <name>Mn(2+)</name>
        <dbReference type="ChEBI" id="CHEBI:29035"/>
        <label>2</label>
    </ligand>
</feature>
<feature type="binding site" evidence="1">
    <location>
        <position position="173"/>
    </location>
    <ligand>
        <name>Mn(2+)</name>
        <dbReference type="ChEBI" id="CHEBI:29035"/>
        <label>2</label>
    </ligand>
</feature>
<feature type="binding site" evidence="1">
    <location>
        <position position="248"/>
    </location>
    <ligand>
        <name>Mn(2+)</name>
        <dbReference type="ChEBI" id="CHEBI:29035"/>
        <label>2</label>
    </ligand>
</feature>
<protein>
    <recommendedName>
        <fullName>Serine/threonine-protein phosphatase PP1-gamma catalytic subunit B</fullName>
        <shortName>PP-1G-B</shortName>
    </recommendedName>
    <alternativeName>
        <fullName evidence="7">Protein phosphatase 1 zeta</fullName>
        <shortName evidence="7">xPP1-zeta</shortName>
        <ecNumber>3.1.3.16</ecNumber>
    </alternativeName>
</protein>
<name>PP1GB_XENLA</name>
<accession>Q7SZ10</accession>
<accession>A4PB28</accession>
<sequence>MADVDKLNIDSIIQRLLEVRGSKPGKNVQLQENEIRGLCLKSREIFLSQPILLELEAPLKICGDIHGQYYDLLRLFEYGGFPPESNYLFLGDYVDRGKQSLETICLLLAYKIKYPENFFLLRGNHECASINRIYGFYDECKRRYNIKLWKTFTDCFNCLPIAAIVDEKIFCCHGGLSPDLQSMEQIRRIMRPTDVPDQGLLCDLLWSDPDKDVLGWGENDRGVSFTFGAEVVAKFLHKHDLDLICRAHQVVEDGYEFFAKRQLVTLFSAPNYCGEFDNAGAMMSVDETLMCSFQILKPAEKKKPNASRPVTPPRGIITKQAKK</sequence>